<protein>
    <recommendedName>
        <fullName evidence="1">Orotidine 5'-phosphate decarboxylase</fullName>
        <ecNumber evidence="1">4.1.1.23</ecNumber>
    </recommendedName>
    <alternativeName>
        <fullName evidence="1">OMP decarboxylase</fullName>
        <shortName evidence="1">OMPDCase</shortName>
        <shortName evidence="1">OMPdecase</shortName>
    </alternativeName>
</protein>
<evidence type="ECO:0000255" key="1">
    <source>
        <dbReference type="HAMAP-Rule" id="MF_01215"/>
    </source>
</evidence>
<organism>
    <name type="scientific">Mycobacterium bovis (strain BCG / Pasteur 1173P2)</name>
    <dbReference type="NCBI Taxonomy" id="410289"/>
    <lineage>
        <taxon>Bacteria</taxon>
        <taxon>Bacillati</taxon>
        <taxon>Actinomycetota</taxon>
        <taxon>Actinomycetes</taxon>
        <taxon>Mycobacteriales</taxon>
        <taxon>Mycobacteriaceae</taxon>
        <taxon>Mycobacterium</taxon>
        <taxon>Mycobacterium tuberculosis complex</taxon>
    </lineage>
</organism>
<sequence length="274" mass="27377">MTGFGLRLAEAKARRGPLCLGIDPHPELLRGWDLATTADGLAAFCDICVRAFADFAVVKPQVAFFESYGAAGFAVLERTIAELRAADVLVLADAKRGDIGATMSAYATAWVGDSPLAADAVTASPYLGFGSLRPLLEVAAAHGRGVFVLAATSNPEGAAVQNAAADGRSVAQLVVDQVGAANEAAGPGPGSIGVVVGATAPQAPDLSAFTGPVLVPGVGVQGGRPEALGGLGGAASSQLLPAVAREVLRAGPGVPELRAAGERMRDAVAYLAAV</sequence>
<accession>A1KIH4</accession>
<reference key="1">
    <citation type="journal article" date="2007" name="Proc. Natl. Acad. Sci. U.S.A.">
        <title>Genome plasticity of BCG and impact on vaccine efficacy.</title>
        <authorList>
            <person name="Brosch R."/>
            <person name="Gordon S.V."/>
            <person name="Garnier T."/>
            <person name="Eiglmeier K."/>
            <person name="Frigui W."/>
            <person name="Valenti P."/>
            <person name="Dos Santos S."/>
            <person name="Duthoy S."/>
            <person name="Lacroix C."/>
            <person name="Garcia-Pelayo C."/>
            <person name="Inwald J.K."/>
            <person name="Golby P."/>
            <person name="Garcia J.N."/>
            <person name="Hewinson R.G."/>
            <person name="Behr M.A."/>
            <person name="Quail M.A."/>
            <person name="Churcher C."/>
            <person name="Barrell B.G."/>
            <person name="Parkhill J."/>
            <person name="Cole S.T."/>
        </authorList>
    </citation>
    <scope>NUCLEOTIDE SEQUENCE [LARGE SCALE GENOMIC DNA]</scope>
    <source>
        <strain>BCG / Pasteur 1173P2</strain>
    </source>
</reference>
<proteinExistence type="inferred from homology"/>
<feature type="chain" id="PRO_1000066477" description="Orotidine 5'-phosphate decarboxylase">
    <location>
        <begin position="1"/>
        <end position="274"/>
    </location>
</feature>
<feature type="active site" description="Proton donor" evidence="1">
    <location>
        <position position="95"/>
    </location>
</feature>
<comment type="catalytic activity">
    <reaction evidence="1">
        <text>orotidine 5'-phosphate + H(+) = UMP + CO2</text>
        <dbReference type="Rhea" id="RHEA:11596"/>
        <dbReference type="ChEBI" id="CHEBI:15378"/>
        <dbReference type="ChEBI" id="CHEBI:16526"/>
        <dbReference type="ChEBI" id="CHEBI:57538"/>
        <dbReference type="ChEBI" id="CHEBI:57865"/>
        <dbReference type="EC" id="4.1.1.23"/>
    </reaction>
</comment>
<comment type="pathway">
    <text evidence="1">Pyrimidine metabolism; UMP biosynthesis via de novo pathway; UMP from orotate: step 2/2.</text>
</comment>
<comment type="similarity">
    <text evidence="1">Belongs to the OMP decarboxylase family. Type 2 subfamily.</text>
</comment>
<keyword id="KW-0210">Decarboxylase</keyword>
<keyword id="KW-0456">Lyase</keyword>
<keyword id="KW-0665">Pyrimidine biosynthesis</keyword>
<dbReference type="EC" id="4.1.1.23" evidence="1"/>
<dbReference type="EMBL" id="AM408590">
    <property type="protein sequence ID" value="CAL71433.1"/>
    <property type="molecule type" value="Genomic_DNA"/>
</dbReference>
<dbReference type="RefSeq" id="WP_003407220.1">
    <property type="nucleotide sequence ID" value="NC_008769.1"/>
</dbReference>
<dbReference type="SMR" id="A1KIH4"/>
<dbReference type="KEGG" id="mbb:BCG_1446"/>
<dbReference type="HOGENOM" id="CLU_060704_0_0_11"/>
<dbReference type="UniPathway" id="UPA00070">
    <property type="reaction ID" value="UER00120"/>
</dbReference>
<dbReference type="Proteomes" id="UP000001472">
    <property type="component" value="Chromosome"/>
</dbReference>
<dbReference type="GO" id="GO:0004590">
    <property type="term" value="F:orotidine-5'-phosphate decarboxylase activity"/>
    <property type="evidence" value="ECO:0007669"/>
    <property type="project" value="UniProtKB-UniRule"/>
</dbReference>
<dbReference type="GO" id="GO:0006207">
    <property type="term" value="P:'de novo' pyrimidine nucleobase biosynthetic process"/>
    <property type="evidence" value="ECO:0007669"/>
    <property type="project" value="InterPro"/>
</dbReference>
<dbReference type="GO" id="GO:0044205">
    <property type="term" value="P:'de novo' UMP biosynthetic process"/>
    <property type="evidence" value="ECO:0007669"/>
    <property type="project" value="UniProtKB-UniRule"/>
</dbReference>
<dbReference type="CDD" id="cd04725">
    <property type="entry name" value="OMP_decarboxylase_like"/>
    <property type="match status" value="1"/>
</dbReference>
<dbReference type="Gene3D" id="3.20.20.70">
    <property type="entry name" value="Aldolase class I"/>
    <property type="match status" value="1"/>
</dbReference>
<dbReference type="HAMAP" id="MF_01215">
    <property type="entry name" value="OMPdecase_type2"/>
    <property type="match status" value="1"/>
</dbReference>
<dbReference type="InterPro" id="IPR013785">
    <property type="entry name" value="Aldolase_TIM"/>
</dbReference>
<dbReference type="InterPro" id="IPR018089">
    <property type="entry name" value="OMPdecase_AS"/>
</dbReference>
<dbReference type="InterPro" id="IPR011995">
    <property type="entry name" value="OMPdecase_type-2"/>
</dbReference>
<dbReference type="InterPro" id="IPR001754">
    <property type="entry name" value="OMPdeCOase_dom"/>
</dbReference>
<dbReference type="InterPro" id="IPR011060">
    <property type="entry name" value="RibuloseP-bd_barrel"/>
</dbReference>
<dbReference type="NCBIfam" id="TIGR02127">
    <property type="entry name" value="pyrF_sub2"/>
    <property type="match status" value="1"/>
</dbReference>
<dbReference type="PANTHER" id="PTHR43375">
    <property type="entry name" value="OROTIDINE 5'-PHOSPHATE DECARBOXYLASE"/>
    <property type="match status" value="1"/>
</dbReference>
<dbReference type="PANTHER" id="PTHR43375:SF1">
    <property type="entry name" value="OROTIDINE 5'-PHOSPHATE DECARBOXYLASE"/>
    <property type="match status" value="1"/>
</dbReference>
<dbReference type="Pfam" id="PF00215">
    <property type="entry name" value="OMPdecase"/>
    <property type="match status" value="1"/>
</dbReference>
<dbReference type="SMART" id="SM00934">
    <property type="entry name" value="OMPdecase"/>
    <property type="match status" value="1"/>
</dbReference>
<dbReference type="SUPFAM" id="SSF51366">
    <property type="entry name" value="Ribulose-phoshate binding barrel"/>
    <property type="match status" value="1"/>
</dbReference>
<dbReference type="PROSITE" id="PS00156">
    <property type="entry name" value="OMPDECASE"/>
    <property type="match status" value="1"/>
</dbReference>
<gene>
    <name evidence="1" type="primary">pyrF</name>
    <name type="ordered locus">BCG_1446</name>
</gene>
<name>PYRF_MYCBP</name>